<name>NU2M_MARZI</name>
<keyword id="KW-0249">Electron transport</keyword>
<keyword id="KW-0472">Membrane</keyword>
<keyword id="KW-0496">Mitochondrion</keyword>
<keyword id="KW-0999">Mitochondrion inner membrane</keyword>
<keyword id="KW-0520">NAD</keyword>
<keyword id="KW-0679">Respiratory chain</keyword>
<keyword id="KW-1278">Translocase</keyword>
<keyword id="KW-0812">Transmembrane</keyword>
<keyword id="KW-1133">Transmembrane helix</keyword>
<keyword id="KW-0813">Transport</keyword>
<keyword id="KW-0830">Ubiquinone</keyword>
<sequence length="347" mass="38681">MNPPILAIVMSTVISGTIMVLISSHWLTIWIGFEMNMLAIIPILMKKFNPRAMEASTKYFLTQATASMLLMLGIIINLLLTGQWTVLNMPNPVASNMMTAALAMKLGLSPFHFWVPEVTQGVPMSSGMILLTWQKIAPLSILYQIAPSMNPNLLMAMAIMSVLVGGWGGLNQTQLRKILAYSSIAHMGWMIAVTTYNPTLMLLNLTIYITMTLGTFMLFMLNSSTTTLSLSHTWNKLPLIASLILMTMLSLGGLPPLSGFIPKWMIIHELTKNDMAIMATFMAMTALLNLYFYMRLTYATALTMFPSTNIMKMKWQFESTKNTTLLPPLIMISTMLLPLTPMVLTLF</sequence>
<proteinExistence type="inferred from homology"/>
<accession>Q2TGY2</accession>
<reference key="1">
    <citation type="journal article" date="2006" name="Genetica">
        <title>Phylogeny of the caniform carnivora: evidence from multiple genes.</title>
        <authorList>
            <person name="Yu L."/>
            <person name="Zhang Y.P."/>
        </authorList>
    </citation>
    <scope>NUCLEOTIDE SEQUENCE [GENOMIC DNA]</scope>
</reference>
<reference key="2">
    <citation type="submission" date="2006-08" db="EMBL/GenBank/DDBJ databases">
        <authorList>
            <person name="Yu L."/>
            <person name="Zhang Y.P."/>
        </authorList>
    </citation>
    <scope>SEQUENCE REVISION</scope>
</reference>
<geneLocation type="mitochondrion"/>
<evidence type="ECO:0000250" key="1">
    <source>
        <dbReference type="UniProtKB" id="P03891"/>
    </source>
</evidence>
<evidence type="ECO:0000250" key="2">
    <source>
        <dbReference type="UniProtKB" id="P03892"/>
    </source>
</evidence>
<evidence type="ECO:0000255" key="3"/>
<evidence type="ECO:0000305" key="4"/>
<protein>
    <recommendedName>
        <fullName evidence="1">NADH-ubiquinone oxidoreductase chain 2</fullName>
        <ecNumber evidence="1">7.1.1.2</ecNumber>
    </recommendedName>
    <alternativeName>
        <fullName>NADH dehydrogenase subunit 2</fullName>
    </alternativeName>
</protein>
<dbReference type="EC" id="7.1.1.2" evidence="1"/>
<dbReference type="EMBL" id="AY882062">
    <property type="protein sequence ID" value="AAX76797.2"/>
    <property type="molecule type" value="Genomic_DNA"/>
</dbReference>
<dbReference type="SMR" id="Q2TGY2"/>
<dbReference type="GO" id="GO:0005743">
    <property type="term" value="C:mitochondrial inner membrane"/>
    <property type="evidence" value="ECO:0000250"/>
    <property type="project" value="UniProtKB"/>
</dbReference>
<dbReference type="GO" id="GO:0008137">
    <property type="term" value="F:NADH dehydrogenase (ubiquinone) activity"/>
    <property type="evidence" value="ECO:0000250"/>
    <property type="project" value="UniProtKB"/>
</dbReference>
<dbReference type="GO" id="GO:0006120">
    <property type="term" value="P:mitochondrial electron transport, NADH to ubiquinone"/>
    <property type="evidence" value="ECO:0000250"/>
    <property type="project" value="UniProtKB"/>
</dbReference>
<dbReference type="GO" id="GO:0032981">
    <property type="term" value="P:mitochondrial respiratory chain complex I assembly"/>
    <property type="evidence" value="ECO:0000250"/>
    <property type="project" value="UniProtKB"/>
</dbReference>
<dbReference type="InterPro" id="IPR050175">
    <property type="entry name" value="Complex_I_Subunit_2"/>
</dbReference>
<dbReference type="InterPro" id="IPR010933">
    <property type="entry name" value="NADH_DH_su2_C"/>
</dbReference>
<dbReference type="InterPro" id="IPR003917">
    <property type="entry name" value="NADH_UbQ_OxRdtase_chain2"/>
</dbReference>
<dbReference type="InterPro" id="IPR001750">
    <property type="entry name" value="ND/Mrp_TM"/>
</dbReference>
<dbReference type="PANTHER" id="PTHR46552">
    <property type="entry name" value="NADH-UBIQUINONE OXIDOREDUCTASE CHAIN 2"/>
    <property type="match status" value="1"/>
</dbReference>
<dbReference type="PANTHER" id="PTHR46552:SF1">
    <property type="entry name" value="NADH-UBIQUINONE OXIDOREDUCTASE CHAIN 2"/>
    <property type="match status" value="1"/>
</dbReference>
<dbReference type="Pfam" id="PF06444">
    <property type="entry name" value="NADH_dehy_S2_C"/>
    <property type="match status" value="1"/>
</dbReference>
<dbReference type="Pfam" id="PF00361">
    <property type="entry name" value="Proton_antipo_M"/>
    <property type="match status" value="1"/>
</dbReference>
<dbReference type="PRINTS" id="PR01436">
    <property type="entry name" value="NADHDHGNASE2"/>
</dbReference>
<gene>
    <name evidence="1" type="primary">MT-ND2</name>
    <name type="synonym">MTND2</name>
    <name type="synonym">NADH2</name>
    <name type="synonym">ND2</name>
</gene>
<comment type="function">
    <text evidence="1">Core subunit of the mitochondrial membrane respiratory chain NADH dehydrogenase (Complex I) which catalyzes electron transfer from NADH through the respiratory chain, using ubiquinone as an electron acceptor. Essential for the catalytic activity and assembly of complex I.</text>
</comment>
<comment type="catalytic activity">
    <reaction evidence="1">
        <text>a ubiquinone + NADH + 5 H(+)(in) = a ubiquinol + NAD(+) + 4 H(+)(out)</text>
        <dbReference type="Rhea" id="RHEA:29091"/>
        <dbReference type="Rhea" id="RHEA-COMP:9565"/>
        <dbReference type="Rhea" id="RHEA-COMP:9566"/>
        <dbReference type="ChEBI" id="CHEBI:15378"/>
        <dbReference type="ChEBI" id="CHEBI:16389"/>
        <dbReference type="ChEBI" id="CHEBI:17976"/>
        <dbReference type="ChEBI" id="CHEBI:57540"/>
        <dbReference type="ChEBI" id="CHEBI:57945"/>
        <dbReference type="EC" id="7.1.1.2"/>
    </reaction>
</comment>
<comment type="subunit">
    <text evidence="1 2">Core subunit of respiratory chain NADH dehydrogenase (Complex I) which is composed of 45 different subunits. Interacts with TMEM242 (By similarity).</text>
</comment>
<comment type="subcellular location">
    <subcellularLocation>
        <location evidence="2">Mitochondrion inner membrane</location>
        <topology evidence="3">Multi-pass membrane protein</topology>
    </subcellularLocation>
</comment>
<comment type="similarity">
    <text evidence="4">Belongs to the complex I subunit 2 family.</text>
</comment>
<feature type="chain" id="PRO_0000226705" description="NADH-ubiquinone oxidoreductase chain 2">
    <location>
        <begin position="1"/>
        <end position="347"/>
    </location>
</feature>
<feature type="transmembrane region" description="Helical" evidence="3">
    <location>
        <begin position="5"/>
        <end position="22"/>
    </location>
</feature>
<feature type="transmembrane region" description="Helical" evidence="3">
    <location>
        <begin position="26"/>
        <end position="45"/>
    </location>
</feature>
<feature type="transmembrane region" description="Helical" evidence="3">
    <location>
        <begin position="60"/>
        <end position="80"/>
    </location>
</feature>
<feature type="transmembrane region" description="Helical" evidence="3">
    <location>
        <begin position="150"/>
        <end position="170"/>
    </location>
</feature>
<feature type="transmembrane region" description="Helical" evidence="3">
    <location>
        <begin position="178"/>
        <end position="198"/>
    </location>
</feature>
<feature type="transmembrane region" description="Helical" evidence="3">
    <location>
        <begin position="200"/>
        <end position="220"/>
    </location>
</feature>
<feature type="transmembrane region" description="Helical" evidence="3">
    <location>
        <begin position="237"/>
        <end position="257"/>
    </location>
</feature>
<feature type="transmembrane region" description="Helical" evidence="3">
    <location>
        <begin position="274"/>
        <end position="294"/>
    </location>
</feature>
<feature type="transmembrane region" description="Helical" evidence="3">
    <location>
        <begin position="327"/>
        <end position="347"/>
    </location>
</feature>
<organism>
    <name type="scientific">Martes zibellina</name>
    <name type="common">Sable</name>
    <dbReference type="NCBI Taxonomy" id="36722"/>
    <lineage>
        <taxon>Eukaryota</taxon>
        <taxon>Metazoa</taxon>
        <taxon>Chordata</taxon>
        <taxon>Craniata</taxon>
        <taxon>Vertebrata</taxon>
        <taxon>Euteleostomi</taxon>
        <taxon>Mammalia</taxon>
        <taxon>Eutheria</taxon>
        <taxon>Laurasiatheria</taxon>
        <taxon>Carnivora</taxon>
        <taxon>Caniformia</taxon>
        <taxon>Musteloidea</taxon>
        <taxon>Mustelidae</taxon>
        <taxon>Guloninae</taxon>
        <taxon>Martes</taxon>
    </lineage>
</organism>